<evidence type="ECO:0000255" key="1">
    <source>
        <dbReference type="HAMAP-Rule" id="MF_01850"/>
    </source>
</evidence>
<name>TTCA_ACIB3</name>
<dbReference type="EC" id="2.8.1.-" evidence="1"/>
<dbReference type="EMBL" id="CP001172">
    <property type="protein sequence ID" value="ACJ57149.1"/>
    <property type="molecule type" value="Genomic_DNA"/>
</dbReference>
<dbReference type="RefSeq" id="WP_000271249.1">
    <property type="nucleotide sequence ID" value="NZ_CP001172.1"/>
</dbReference>
<dbReference type="SMR" id="B7GY44"/>
<dbReference type="HOGENOM" id="CLU_026481_0_0_6"/>
<dbReference type="Proteomes" id="UP000006924">
    <property type="component" value="Chromosome"/>
</dbReference>
<dbReference type="GO" id="GO:0005737">
    <property type="term" value="C:cytoplasm"/>
    <property type="evidence" value="ECO:0007669"/>
    <property type="project" value="UniProtKB-SubCell"/>
</dbReference>
<dbReference type="GO" id="GO:0051539">
    <property type="term" value="F:4 iron, 4 sulfur cluster binding"/>
    <property type="evidence" value="ECO:0007669"/>
    <property type="project" value="UniProtKB-UniRule"/>
</dbReference>
<dbReference type="GO" id="GO:0005524">
    <property type="term" value="F:ATP binding"/>
    <property type="evidence" value="ECO:0007669"/>
    <property type="project" value="UniProtKB-UniRule"/>
</dbReference>
<dbReference type="GO" id="GO:0000287">
    <property type="term" value="F:magnesium ion binding"/>
    <property type="evidence" value="ECO:0007669"/>
    <property type="project" value="UniProtKB-UniRule"/>
</dbReference>
<dbReference type="GO" id="GO:0016783">
    <property type="term" value="F:sulfurtransferase activity"/>
    <property type="evidence" value="ECO:0007669"/>
    <property type="project" value="UniProtKB-UniRule"/>
</dbReference>
<dbReference type="GO" id="GO:0000049">
    <property type="term" value="F:tRNA binding"/>
    <property type="evidence" value="ECO:0007669"/>
    <property type="project" value="UniProtKB-KW"/>
</dbReference>
<dbReference type="GO" id="GO:0034227">
    <property type="term" value="P:tRNA thio-modification"/>
    <property type="evidence" value="ECO:0007669"/>
    <property type="project" value="UniProtKB-UniRule"/>
</dbReference>
<dbReference type="CDD" id="cd24138">
    <property type="entry name" value="TtcA-like"/>
    <property type="match status" value="1"/>
</dbReference>
<dbReference type="Gene3D" id="3.40.50.620">
    <property type="entry name" value="HUPs"/>
    <property type="match status" value="1"/>
</dbReference>
<dbReference type="HAMAP" id="MF_01850">
    <property type="entry name" value="TtcA"/>
    <property type="match status" value="1"/>
</dbReference>
<dbReference type="InterPro" id="IPR014729">
    <property type="entry name" value="Rossmann-like_a/b/a_fold"/>
</dbReference>
<dbReference type="InterPro" id="IPR011063">
    <property type="entry name" value="TilS/TtcA_N"/>
</dbReference>
<dbReference type="InterPro" id="IPR012089">
    <property type="entry name" value="tRNA_Cyd_32_2_STrfase"/>
</dbReference>
<dbReference type="InterPro" id="IPR035107">
    <property type="entry name" value="tRNA_thiolation_TtcA_Ctu1"/>
</dbReference>
<dbReference type="NCBIfam" id="NF007972">
    <property type="entry name" value="PRK10696.1"/>
    <property type="match status" value="1"/>
</dbReference>
<dbReference type="PANTHER" id="PTHR43686:SF1">
    <property type="entry name" value="AMINOTRAN_5 DOMAIN-CONTAINING PROTEIN"/>
    <property type="match status" value="1"/>
</dbReference>
<dbReference type="PANTHER" id="PTHR43686">
    <property type="entry name" value="SULFURTRANSFERASE-RELATED"/>
    <property type="match status" value="1"/>
</dbReference>
<dbReference type="Pfam" id="PF01171">
    <property type="entry name" value="ATP_bind_3"/>
    <property type="match status" value="1"/>
</dbReference>
<dbReference type="PIRSF" id="PIRSF004976">
    <property type="entry name" value="ATPase_YdaO"/>
    <property type="match status" value="1"/>
</dbReference>
<dbReference type="SUPFAM" id="SSF52402">
    <property type="entry name" value="Adenine nucleotide alpha hydrolases-like"/>
    <property type="match status" value="1"/>
</dbReference>
<organism>
    <name type="scientific">Acinetobacter baumannii (strain AB307-0294)</name>
    <dbReference type="NCBI Taxonomy" id="557600"/>
    <lineage>
        <taxon>Bacteria</taxon>
        <taxon>Pseudomonadati</taxon>
        <taxon>Pseudomonadota</taxon>
        <taxon>Gammaproteobacteria</taxon>
        <taxon>Moraxellales</taxon>
        <taxon>Moraxellaceae</taxon>
        <taxon>Acinetobacter</taxon>
        <taxon>Acinetobacter calcoaceticus/baumannii complex</taxon>
    </lineage>
</organism>
<protein>
    <recommendedName>
        <fullName evidence="1">tRNA-cytidine(32) 2-sulfurtransferase</fullName>
        <ecNumber evidence="1">2.8.1.-</ecNumber>
    </recommendedName>
    <alternativeName>
        <fullName evidence="1">Two-thiocytidine biosynthesis protein A</fullName>
    </alternativeName>
    <alternativeName>
        <fullName evidence="1">tRNA 2-thiocytidine biosynthesis protein TtcA</fullName>
    </alternativeName>
</protein>
<gene>
    <name evidence="1" type="primary">ttcA</name>
    <name type="ordered locus">ABBFA_000820</name>
</gene>
<reference key="1">
    <citation type="journal article" date="2008" name="J. Bacteriol.">
        <title>Comparative genome sequence analysis of multidrug-resistant Acinetobacter baumannii.</title>
        <authorList>
            <person name="Adams M.D."/>
            <person name="Goglin K."/>
            <person name="Molyneaux N."/>
            <person name="Hujer K.M."/>
            <person name="Lavender H."/>
            <person name="Jamison J.J."/>
            <person name="MacDonald I.J."/>
            <person name="Martin K.M."/>
            <person name="Russo T."/>
            <person name="Campagnari A.A."/>
            <person name="Hujer A.M."/>
            <person name="Bonomo R.A."/>
            <person name="Gill S.R."/>
        </authorList>
    </citation>
    <scope>NUCLEOTIDE SEQUENCE [LARGE SCALE GENOMIC DNA]</scope>
    <source>
        <strain>AB307-0294</strain>
    </source>
</reference>
<accession>B7GY44</accession>
<sequence>MYAPVESNEGFNFKPELPTSSAYYRLLKKLRRQVGHAIRDFNMIEDGDKVMVCVSGGKDSYTLLDILLQFKRIAPINFDIVAVNLDQKQPGFPEDVLPRYMEENNIPYYILEKDTYSITKRLTPEGKTYCAVCSRLRRGSLYGFAQEIGATKVALGHHRDDIIATFFLNLFHGGSLKAMPPKLLSSDKKNILIRPLAYVEEKDIIKYAELRKFPIIPCNLCGSQENLQRAMINEMLREWDKQYPKRLHSIFGALQNVSPSQLADRDLFDFEVLDSQRELDFKDPEELKKRLDVVNLSFAAE</sequence>
<proteinExistence type="inferred from homology"/>
<comment type="function">
    <text evidence="1">Catalyzes the ATP-dependent 2-thiolation of cytidine in position 32 of tRNA, to form 2-thiocytidine (s(2)C32). The sulfur atoms are provided by the cysteine/cysteine desulfurase (IscS) system.</text>
</comment>
<comment type="catalytic activity">
    <reaction evidence="1">
        <text>cytidine(32) in tRNA + S-sulfanyl-L-cysteinyl-[cysteine desulfurase] + AH2 + ATP = 2-thiocytidine(32) in tRNA + L-cysteinyl-[cysteine desulfurase] + A + AMP + diphosphate + H(+)</text>
        <dbReference type="Rhea" id="RHEA:57048"/>
        <dbReference type="Rhea" id="RHEA-COMP:10288"/>
        <dbReference type="Rhea" id="RHEA-COMP:12157"/>
        <dbReference type="Rhea" id="RHEA-COMP:12158"/>
        <dbReference type="Rhea" id="RHEA-COMP:14821"/>
        <dbReference type="ChEBI" id="CHEBI:13193"/>
        <dbReference type="ChEBI" id="CHEBI:15378"/>
        <dbReference type="ChEBI" id="CHEBI:17499"/>
        <dbReference type="ChEBI" id="CHEBI:29950"/>
        <dbReference type="ChEBI" id="CHEBI:30616"/>
        <dbReference type="ChEBI" id="CHEBI:33019"/>
        <dbReference type="ChEBI" id="CHEBI:61963"/>
        <dbReference type="ChEBI" id="CHEBI:82748"/>
        <dbReference type="ChEBI" id="CHEBI:141453"/>
        <dbReference type="ChEBI" id="CHEBI:456215"/>
    </reaction>
    <physiologicalReaction direction="left-to-right" evidence="1">
        <dbReference type="Rhea" id="RHEA:57049"/>
    </physiologicalReaction>
</comment>
<comment type="cofactor">
    <cofactor evidence="1">
        <name>Mg(2+)</name>
        <dbReference type="ChEBI" id="CHEBI:18420"/>
    </cofactor>
</comment>
<comment type="cofactor">
    <cofactor evidence="1">
        <name>[4Fe-4S] cluster</name>
        <dbReference type="ChEBI" id="CHEBI:49883"/>
    </cofactor>
    <text evidence="1">Binds 1 [4Fe-4S] cluster per subunit. The cluster is chelated by three Cys residues, the fourth Fe has a free coordination site that may bind a sulfur atom transferred from the persulfide of IscS.</text>
</comment>
<comment type="pathway">
    <text evidence="1">tRNA modification.</text>
</comment>
<comment type="subunit">
    <text evidence="1">Homodimer.</text>
</comment>
<comment type="subcellular location">
    <subcellularLocation>
        <location evidence="1">Cytoplasm</location>
    </subcellularLocation>
</comment>
<comment type="miscellaneous">
    <text evidence="1">The thiolation reaction likely consists of two steps: a first activation step by ATP to form an adenylated intermediate of the target base of tRNA, and a second nucleophilic substitution step of the sulfur (S) atom supplied by the hydrosulfide attached to the Fe-S cluster.</text>
</comment>
<comment type="similarity">
    <text evidence="1">Belongs to the TtcA family.</text>
</comment>
<feature type="chain" id="PRO_1000188620" description="tRNA-cytidine(32) 2-sulfurtransferase">
    <location>
        <begin position="1"/>
        <end position="301"/>
    </location>
</feature>
<feature type="short sequence motif" description="PP-loop motif" evidence="1">
    <location>
        <begin position="55"/>
        <end position="60"/>
    </location>
</feature>
<feature type="binding site" evidence="1">
    <location>
        <position position="130"/>
    </location>
    <ligand>
        <name>[4Fe-4S] cluster</name>
        <dbReference type="ChEBI" id="CHEBI:49883"/>
    </ligand>
</feature>
<feature type="binding site" evidence="1">
    <location>
        <position position="133"/>
    </location>
    <ligand>
        <name>[4Fe-4S] cluster</name>
        <dbReference type="ChEBI" id="CHEBI:49883"/>
    </ligand>
</feature>
<feature type="binding site" evidence="1">
    <location>
        <position position="221"/>
    </location>
    <ligand>
        <name>[4Fe-4S] cluster</name>
        <dbReference type="ChEBI" id="CHEBI:49883"/>
    </ligand>
</feature>
<keyword id="KW-0004">4Fe-4S</keyword>
<keyword id="KW-0067">ATP-binding</keyword>
<keyword id="KW-0963">Cytoplasm</keyword>
<keyword id="KW-0408">Iron</keyword>
<keyword id="KW-0411">Iron-sulfur</keyword>
<keyword id="KW-0460">Magnesium</keyword>
<keyword id="KW-0479">Metal-binding</keyword>
<keyword id="KW-0547">Nucleotide-binding</keyword>
<keyword id="KW-0694">RNA-binding</keyword>
<keyword id="KW-0808">Transferase</keyword>
<keyword id="KW-0819">tRNA processing</keyword>
<keyword id="KW-0820">tRNA-binding</keyword>